<sequence>MSNFLPIPTKAATPLPSFAKHLLDYISAHFRDTHSEAFRKDVDVLVGMRKDWVEAKLEAHPEIIRAFMRYHAQLAFLSTKFPSDINLPFAYYLPFPATFSLSPDAPISLSSLTFERACVLFNMTALYASMAAAERRAEAEGIKRALGYLTAAAGVLEYLITSVLPTLRSELSSPQAAGYDMTESFLGTLKEFVLAEAQECYWQQAVLQGTYKNGLIGKLSMKVSEYYKAALASMNGTDYPSSSYFPLNWTAHMNVKQMHFEAAAQFRLSQEDLEKSRYGEEIGRLKVAESLAKKGLDAARKGVADSVVSDLKQLHAAIKSSLERAVRDNDLVYVQPIPPANQLAPIVGVGMVKVNVPAEVAEPVAWLMGGKAGMEPLFSGLVPYGVHLALSIYDDRKDTLVRDLDGKREELDGLAASTLQSLNLPGSIQALDRPVGLPPSLLKKSEEVASSGGIERIRSLLDEVNRLAHANVQSLNEAMDILDQEATENESLIARQPELQQTRQPSHVANQPLIQMAEQYEATIKQAGGSDATVRAKWEEWARLVGILAAGEMEMEDYVPGTTSPSGSLPPSVRPLRASLEELDDRIAHRARLVREARQISAADDIRPEVLKEAAKLAHGGSGDVKTEWFEDLFEKGLEKYMGVKREMDEEVAKHDELLEQIRTQNESFLSERKDDPIIKERERRLQDMDLAYWKWREIVDNAEEGIKFYNSFAEMLHGFKAACGQFLNTRRIDVGQMTTQFQQQMNVSEPQQQPEPRYQSPSPQSFQPSFSPSPSHFQPSAPSSFSSSPVRSPAPSAPARRESPPKTLSFLPHPSSSAWQPASVDFLPPPPPPPILRSGGIQSQPKVAPPVTPSITAIRDQTQGTPRRMTRAAAAAAERDEATERNKYSSGGPRRKGGGVV</sequence>
<organism>
    <name type="scientific">Cryptococcus neoformans var. neoformans serotype D (strain JEC21 / ATCC MYA-565)</name>
    <name type="common">Filobasidiella neoformans</name>
    <dbReference type="NCBI Taxonomy" id="214684"/>
    <lineage>
        <taxon>Eukaryota</taxon>
        <taxon>Fungi</taxon>
        <taxon>Dikarya</taxon>
        <taxon>Basidiomycota</taxon>
        <taxon>Agaricomycotina</taxon>
        <taxon>Tremellomycetes</taxon>
        <taxon>Tremellales</taxon>
        <taxon>Cryptococcaceae</taxon>
        <taxon>Cryptococcus</taxon>
        <taxon>Cryptococcus neoformans species complex</taxon>
    </lineage>
</organism>
<comment type="function">
    <text evidence="1">Required for the proteolytic cleavage of the transcription factor RIM101 in response to alkaline ambient pH. May act as a scaffold protein that recruits the calpain-like protease RIM13 via VPS32 to its substrate RIM101 (By similarity).</text>
</comment>
<comment type="subunit">
    <text evidence="1">Interacts with RIM101 by binding to its YPX[LI] motif.</text>
</comment>
<comment type="similarity">
    <text evidence="4">Belongs to the palA/RIM20 family.</text>
</comment>
<proteinExistence type="inferred from homology"/>
<feature type="chain" id="PRO_0000218877" description="pH-response regulator protein palA/RIM20">
    <location>
        <begin position="1"/>
        <end position="902"/>
    </location>
</feature>
<feature type="domain" description="BRO1" evidence="2">
    <location>
        <begin position="3"/>
        <end position="415"/>
    </location>
</feature>
<feature type="region of interest" description="Disordered" evidence="3">
    <location>
        <begin position="744"/>
        <end position="902"/>
    </location>
</feature>
<feature type="compositionally biased region" description="Polar residues" evidence="3">
    <location>
        <begin position="744"/>
        <end position="755"/>
    </location>
</feature>
<feature type="compositionally biased region" description="Low complexity" evidence="3">
    <location>
        <begin position="757"/>
        <end position="799"/>
    </location>
</feature>
<feature type="compositionally biased region" description="Polar residues" evidence="3">
    <location>
        <begin position="854"/>
        <end position="865"/>
    </location>
</feature>
<feature type="compositionally biased region" description="Low complexity" evidence="3">
    <location>
        <begin position="866"/>
        <end position="877"/>
    </location>
</feature>
<feature type="compositionally biased region" description="Basic and acidic residues" evidence="3">
    <location>
        <begin position="878"/>
        <end position="888"/>
    </location>
</feature>
<protein>
    <recommendedName>
        <fullName>pH-response regulator protein palA/RIM20</fullName>
    </recommendedName>
</protein>
<evidence type="ECO:0000250" key="1"/>
<evidence type="ECO:0000255" key="2">
    <source>
        <dbReference type="PROSITE-ProRule" id="PRU00526"/>
    </source>
</evidence>
<evidence type="ECO:0000256" key="3">
    <source>
        <dbReference type="SAM" id="MobiDB-lite"/>
    </source>
</evidence>
<evidence type="ECO:0000305" key="4"/>
<name>PALA_CRYNJ</name>
<reference key="1">
    <citation type="journal article" date="2005" name="Science">
        <title>The genome of the basidiomycetous yeast and human pathogen Cryptococcus neoformans.</title>
        <authorList>
            <person name="Loftus B.J."/>
            <person name="Fung E."/>
            <person name="Roncaglia P."/>
            <person name="Rowley D."/>
            <person name="Amedeo P."/>
            <person name="Bruno D."/>
            <person name="Vamathevan J."/>
            <person name="Miranda M."/>
            <person name="Anderson I.J."/>
            <person name="Fraser J.A."/>
            <person name="Allen J.E."/>
            <person name="Bosdet I.E."/>
            <person name="Brent M.R."/>
            <person name="Chiu R."/>
            <person name="Doering T.L."/>
            <person name="Donlin M.J."/>
            <person name="D'Souza C.A."/>
            <person name="Fox D.S."/>
            <person name="Grinberg V."/>
            <person name="Fu J."/>
            <person name="Fukushima M."/>
            <person name="Haas B.J."/>
            <person name="Huang J.C."/>
            <person name="Janbon G."/>
            <person name="Jones S.J.M."/>
            <person name="Koo H.L."/>
            <person name="Krzywinski M.I."/>
            <person name="Kwon-Chung K.J."/>
            <person name="Lengeler K.B."/>
            <person name="Maiti R."/>
            <person name="Marra M.A."/>
            <person name="Marra R.E."/>
            <person name="Mathewson C.A."/>
            <person name="Mitchell T.G."/>
            <person name="Pertea M."/>
            <person name="Riggs F.R."/>
            <person name="Salzberg S.L."/>
            <person name="Schein J.E."/>
            <person name="Shvartsbeyn A."/>
            <person name="Shin H."/>
            <person name="Shumway M."/>
            <person name="Specht C.A."/>
            <person name="Suh B.B."/>
            <person name="Tenney A."/>
            <person name="Utterback T.R."/>
            <person name="Wickes B.L."/>
            <person name="Wortman J.R."/>
            <person name="Wye N.H."/>
            <person name="Kronstad J.W."/>
            <person name="Lodge J.K."/>
            <person name="Heitman J."/>
            <person name="Davis R.W."/>
            <person name="Fraser C.M."/>
            <person name="Hyman R.W."/>
        </authorList>
    </citation>
    <scope>NUCLEOTIDE SEQUENCE [LARGE SCALE GENOMIC DNA]</scope>
    <source>
        <strain>JEC21 / ATCC MYA-565</strain>
    </source>
</reference>
<accession>P0CM46</accession>
<accession>Q55NW1</accession>
<accession>Q5KEK0</accession>
<dbReference type="EMBL" id="AE017347">
    <property type="protein sequence ID" value="AAW44451.1"/>
    <property type="molecule type" value="Genomic_DNA"/>
</dbReference>
<dbReference type="RefSeq" id="XP_571758.1">
    <property type="nucleotide sequence ID" value="XM_571758.1"/>
</dbReference>
<dbReference type="SMR" id="P0CM46"/>
<dbReference type="STRING" id="214684.P0CM46"/>
<dbReference type="PaxDb" id="214684-P0CM46"/>
<dbReference type="EnsemblFungi" id="AAW44451">
    <property type="protein sequence ID" value="AAW44451"/>
    <property type="gene ID" value="CNG00250"/>
</dbReference>
<dbReference type="GeneID" id="3258948"/>
<dbReference type="KEGG" id="cne:CNG00250"/>
<dbReference type="VEuPathDB" id="FungiDB:CNG00250"/>
<dbReference type="eggNOG" id="KOG2220">
    <property type="taxonomic scope" value="Eukaryota"/>
</dbReference>
<dbReference type="HOGENOM" id="CLU_007181_2_1_1"/>
<dbReference type="InParanoid" id="P0CM46"/>
<dbReference type="OMA" id="VSHAEEM"/>
<dbReference type="OrthoDB" id="64867at2759"/>
<dbReference type="Proteomes" id="UP000002149">
    <property type="component" value="Chromosome 7"/>
</dbReference>
<dbReference type="GO" id="GO:0005768">
    <property type="term" value="C:endosome"/>
    <property type="evidence" value="ECO:0000318"/>
    <property type="project" value="GO_Central"/>
</dbReference>
<dbReference type="GO" id="GO:0042306">
    <property type="term" value="P:regulation of protein import into nucleus"/>
    <property type="evidence" value="ECO:0000315"/>
    <property type="project" value="CACAO"/>
</dbReference>
<dbReference type="CDD" id="cd09241">
    <property type="entry name" value="BRO1_ScRim20-like"/>
    <property type="match status" value="1"/>
</dbReference>
<dbReference type="CDD" id="cd09236">
    <property type="entry name" value="V_AnPalA_UmRIM20_like"/>
    <property type="match status" value="1"/>
</dbReference>
<dbReference type="FunFam" id="1.25.40.280:FF:000007">
    <property type="entry name" value="Unplaced genomic scaffold supercont1.4, whole genome shotgun sequence"/>
    <property type="match status" value="1"/>
</dbReference>
<dbReference type="Gene3D" id="1.20.120.560">
    <property type="entry name" value="alix/aip1 in complex with the ypdl late domain"/>
    <property type="match status" value="1"/>
</dbReference>
<dbReference type="Gene3D" id="1.20.140.50">
    <property type="entry name" value="alix/aip1 like domains"/>
    <property type="match status" value="1"/>
</dbReference>
<dbReference type="Gene3D" id="1.25.40.280">
    <property type="entry name" value="alix/aip1 like domains"/>
    <property type="match status" value="1"/>
</dbReference>
<dbReference type="InterPro" id="IPR025304">
    <property type="entry name" value="ALIX_V_dom"/>
</dbReference>
<dbReference type="InterPro" id="IPR004328">
    <property type="entry name" value="BRO1_dom"/>
</dbReference>
<dbReference type="InterPro" id="IPR038499">
    <property type="entry name" value="BRO1_sf"/>
</dbReference>
<dbReference type="PANTHER" id="PTHR23030">
    <property type="entry name" value="PCD6 INTERACTING PROTEIN-RELATED"/>
    <property type="match status" value="1"/>
</dbReference>
<dbReference type="PANTHER" id="PTHR23030:SF39">
    <property type="entry name" value="PROGRAMMED CELL DEATH 6-INTERACTING PROTEIN"/>
    <property type="match status" value="1"/>
</dbReference>
<dbReference type="Pfam" id="PF13949">
    <property type="entry name" value="ALIX_LYPXL_bnd"/>
    <property type="match status" value="1"/>
</dbReference>
<dbReference type="Pfam" id="PF03097">
    <property type="entry name" value="BRO1"/>
    <property type="match status" value="1"/>
</dbReference>
<dbReference type="SMART" id="SM01041">
    <property type="entry name" value="BRO1"/>
    <property type="match status" value="1"/>
</dbReference>
<dbReference type="PROSITE" id="PS51180">
    <property type="entry name" value="BRO1"/>
    <property type="match status" value="1"/>
</dbReference>
<gene>
    <name type="primary">RIM20</name>
    <name type="ordered locus">CNG00250</name>
</gene>
<keyword id="KW-1185">Reference proteome</keyword>